<proteinExistence type="inferred from homology"/>
<feature type="chain" id="PRO_1000213085" description="NADPH-dependent 7-cyano-7-deazaguanine reductase">
    <location>
        <begin position="1"/>
        <end position="276"/>
    </location>
</feature>
<feature type="active site" description="Thioimide intermediate" evidence="1">
    <location>
        <position position="178"/>
    </location>
</feature>
<feature type="active site" description="Proton donor" evidence="1">
    <location>
        <position position="185"/>
    </location>
</feature>
<feature type="binding site" evidence="1">
    <location>
        <begin position="80"/>
        <end position="82"/>
    </location>
    <ligand>
        <name>substrate</name>
    </ligand>
</feature>
<feature type="binding site" evidence="1">
    <location>
        <begin position="82"/>
        <end position="83"/>
    </location>
    <ligand>
        <name>NADPH</name>
        <dbReference type="ChEBI" id="CHEBI:57783"/>
    </ligand>
</feature>
<feature type="binding site" evidence="1">
    <location>
        <begin position="217"/>
        <end position="218"/>
    </location>
    <ligand>
        <name>substrate</name>
    </ligand>
</feature>
<feature type="binding site" evidence="1">
    <location>
        <begin position="246"/>
        <end position="247"/>
    </location>
    <ligand>
        <name>NADPH</name>
        <dbReference type="ChEBI" id="CHEBI:57783"/>
    </ligand>
</feature>
<protein>
    <recommendedName>
        <fullName evidence="1">NADPH-dependent 7-cyano-7-deazaguanine reductase</fullName>
        <ecNumber evidence="1">1.7.1.13</ecNumber>
    </recommendedName>
    <alternativeName>
        <fullName evidence="1">7-cyano-7-carbaguanine reductase</fullName>
    </alternativeName>
    <alternativeName>
        <fullName evidence="1">NADPH-dependent nitrile oxidoreductase</fullName>
    </alternativeName>
    <alternativeName>
        <fullName evidence="1">PreQ(0) reductase</fullName>
    </alternativeName>
</protein>
<accession>C5BR59</accession>
<reference key="1">
    <citation type="journal article" date="2009" name="PLoS ONE">
        <title>The complete genome of Teredinibacter turnerae T7901: an intracellular endosymbiont of marine wood-boring bivalves (shipworms).</title>
        <authorList>
            <person name="Yang J.C."/>
            <person name="Madupu R."/>
            <person name="Durkin A.S."/>
            <person name="Ekborg N.A."/>
            <person name="Pedamallu C.S."/>
            <person name="Hostetler J.B."/>
            <person name="Radune D."/>
            <person name="Toms B.S."/>
            <person name="Henrissat B."/>
            <person name="Coutinho P.M."/>
            <person name="Schwarz S."/>
            <person name="Field L."/>
            <person name="Trindade-Silva A.E."/>
            <person name="Soares C.A.G."/>
            <person name="Elshahawi S."/>
            <person name="Hanora A."/>
            <person name="Schmidt E.W."/>
            <person name="Haygood M.G."/>
            <person name="Posfai J."/>
            <person name="Benner J."/>
            <person name="Madinger C."/>
            <person name="Nove J."/>
            <person name="Anton B."/>
            <person name="Chaudhary K."/>
            <person name="Foster J."/>
            <person name="Holman A."/>
            <person name="Kumar S."/>
            <person name="Lessard P.A."/>
            <person name="Luyten Y.A."/>
            <person name="Slatko B."/>
            <person name="Wood N."/>
            <person name="Wu B."/>
            <person name="Teplitski M."/>
            <person name="Mougous J.D."/>
            <person name="Ward N."/>
            <person name="Eisen J.A."/>
            <person name="Badger J.H."/>
            <person name="Distel D.L."/>
        </authorList>
    </citation>
    <scope>NUCLEOTIDE SEQUENCE [LARGE SCALE GENOMIC DNA]</scope>
    <source>
        <strain>ATCC 39867 / T7901</strain>
    </source>
</reference>
<comment type="function">
    <text evidence="1">Catalyzes the NADPH-dependent reduction of 7-cyano-7-deazaguanine (preQ0) to 7-aminomethyl-7-deazaguanine (preQ1).</text>
</comment>
<comment type="catalytic activity">
    <reaction evidence="1">
        <text>7-aminomethyl-7-carbaguanine + 2 NADP(+) = 7-cyano-7-deazaguanine + 2 NADPH + 3 H(+)</text>
        <dbReference type="Rhea" id="RHEA:13409"/>
        <dbReference type="ChEBI" id="CHEBI:15378"/>
        <dbReference type="ChEBI" id="CHEBI:45075"/>
        <dbReference type="ChEBI" id="CHEBI:57783"/>
        <dbReference type="ChEBI" id="CHEBI:58349"/>
        <dbReference type="ChEBI" id="CHEBI:58703"/>
        <dbReference type="EC" id="1.7.1.13"/>
    </reaction>
</comment>
<comment type="pathway">
    <text evidence="1">tRNA modification; tRNA-queuosine biosynthesis.</text>
</comment>
<comment type="subunit">
    <text evidence="1">Homodimer.</text>
</comment>
<comment type="subcellular location">
    <subcellularLocation>
        <location evidence="1">Cytoplasm</location>
    </subcellularLocation>
</comment>
<comment type="similarity">
    <text evidence="1">Belongs to the GTP cyclohydrolase I family. QueF type 2 subfamily.</text>
</comment>
<organism>
    <name type="scientific">Teredinibacter turnerae (strain ATCC 39867 / T7901)</name>
    <dbReference type="NCBI Taxonomy" id="377629"/>
    <lineage>
        <taxon>Bacteria</taxon>
        <taxon>Pseudomonadati</taxon>
        <taxon>Pseudomonadota</taxon>
        <taxon>Gammaproteobacteria</taxon>
        <taxon>Cellvibrionales</taxon>
        <taxon>Cellvibrionaceae</taxon>
        <taxon>Teredinibacter</taxon>
    </lineage>
</organism>
<gene>
    <name evidence="1" type="primary">queF</name>
    <name type="ordered locus">TERTU_1141</name>
</gene>
<name>QUEF_TERTT</name>
<sequence length="276" mass="30771">MSDHADTLLGKDTTYPEHYDPALLQPIPRERSRETMVRGDLPFTGVDIWTAYELSWLDSSGKPHVAVGEFWVPADSSAIIESKSLKYYLNSLNQHRFATREQARQAIAGDLSEAAGGEVQVTLFDIDDYSNVGTLPGTCVDTLDAPVYVYQPDASLLKFVDQPGEQQQLFSHLLKSNCPVTGQPDWATVWVQCSGLTLVPESFLAYVVSFRGHQDFHENCVERIFTDLMAGGKLQDLAVYARYTRRGGLDINPLRFSGAQDPEALEQLVSKRIARQ</sequence>
<dbReference type="EC" id="1.7.1.13" evidence="1"/>
<dbReference type="EMBL" id="CP001614">
    <property type="protein sequence ID" value="ACR12787.1"/>
    <property type="molecule type" value="Genomic_DNA"/>
</dbReference>
<dbReference type="RefSeq" id="WP_015818899.1">
    <property type="nucleotide sequence ID" value="NC_012997.1"/>
</dbReference>
<dbReference type="SMR" id="C5BR59"/>
<dbReference type="STRING" id="377629.TERTU_1141"/>
<dbReference type="KEGG" id="ttu:TERTU_1141"/>
<dbReference type="eggNOG" id="COG0780">
    <property type="taxonomic scope" value="Bacteria"/>
</dbReference>
<dbReference type="eggNOG" id="COG2904">
    <property type="taxonomic scope" value="Bacteria"/>
</dbReference>
<dbReference type="HOGENOM" id="CLU_054738_0_0_6"/>
<dbReference type="OrthoDB" id="9789995at2"/>
<dbReference type="UniPathway" id="UPA00392"/>
<dbReference type="Proteomes" id="UP000009080">
    <property type="component" value="Chromosome"/>
</dbReference>
<dbReference type="GO" id="GO:0005737">
    <property type="term" value="C:cytoplasm"/>
    <property type="evidence" value="ECO:0007669"/>
    <property type="project" value="UniProtKB-SubCell"/>
</dbReference>
<dbReference type="GO" id="GO:0033739">
    <property type="term" value="F:preQ1 synthase activity"/>
    <property type="evidence" value="ECO:0007669"/>
    <property type="project" value="UniProtKB-UniRule"/>
</dbReference>
<dbReference type="GO" id="GO:0008616">
    <property type="term" value="P:queuosine biosynthetic process"/>
    <property type="evidence" value="ECO:0007669"/>
    <property type="project" value="UniProtKB-UniRule"/>
</dbReference>
<dbReference type="GO" id="GO:0006400">
    <property type="term" value="P:tRNA modification"/>
    <property type="evidence" value="ECO:0007669"/>
    <property type="project" value="UniProtKB-UniRule"/>
</dbReference>
<dbReference type="Gene3D" id="3.30.1130.10">
    <property type="match status" value="2"/>
</dbReference>
<dbReference type="HAMAP" id="MF_00817">
    <property type="entry name" value="QueF_type2"/>
    <property type="match status" value="1"/>
</dbReference>
<dbReference type="InterPro" id="IPR043133">
    <property type="entry name" value="GTP-CH-I_C/QueF"/>
</dbReference>
<dbReference type="InterPro" id="IPR050084">
    <property type="entry name" value="NADPH_dep_7-cyano-7-deazaG_red"/>
</dbReference>
<dbReference type="InterPro" id="IPR029500">
    <property type="entry name" value="QueF"/>
</dbReference>
<dbReference type="InterPro" id="IPR029139">
    <property type="entry name" value="QueF_N"/>
</dbReference>
<dbReference type="InterPro" id="IPR016428">
    <property type="entry name" value="QueF_type2"/>
</dbReference>
<dbReference type="NCBIfam" id="TIGR03138">
    <property type="entry name" value="QueF"/>
    <property type="match status" value="1"/>
</dbReference>
<dbReference type="PANTHER" id="PTHR34354">
    <property type="entry name" value="NADPH-DEPENDENT 7-CYANO-7-DEAZAGUANINE REDUCTASE"/>
    <property type="match status" value="1"/>
</dbReference>
<dbReference type="PANTHER" id="PTHR34354:SF1">
    <property type="entry name" value="NADPH-DEPENDENT 7-CYANO-7-DEAZAGUANINE REDUCTASE"/>
    <property type="match status" value="1"/>
</dbReference>
<dbReference type="Pfam" id="PF14489">
    <property type="entry name" value="QueF"/>
    <property type="match status" value="1"/>
</dbReference>
<dbReference type="Pfam" id="PF14819">
    <property type="entry name" value="QueF_N"/>
    <property type="match status" value="1"/>
</dbReference>
<dbReference type="PIRSF" id="PIRSF004750">
    <property type="entry name" value="Nitrile_oxidored_YqcD_prd"/>
    <property type="match status" value="1"/>
</dbReference>
<dbReference type="SUPFAM" id="SSF55620">
    <property type="entry name" value="Tetrahydrobiopterin biosynthesis enzymes-like"/>
    <property type="match status" value="1"/>
</dbReference>
<keyword id="KW-0963">Cytoplasm</keyword>
<keyword id="KW-0521">NADP</keyword>
<keyword id="KW-0560">Oxidoreductase</keyword>
<keyword id="KW-0671">Queuosine biosynthesis</keyword>
<keyword id="KW-1185">Reference proteome</keyword>
<evidence type="ECO:0000255" key="1">
    <source>
        <dbReference type="HAMAP-Rule" id="MF_00817"/>
    </source>
</evidence>